<feature type="chain" id="PRO_0000380948" description="Putative 8-amino-7-oxononanoate synthase">
    <location>
        <begin position="1"/>
        <end position="384"/>
    </location>
</feature>
<feature type="binding site" evidence="1">
    <location>
        <position position="22"/>
    </location>
    <ligand>
        <name>substrate</name>
    </ligand>
</feature>
<feature type="binding site" evidence="1">
    <location>
        <begin position="109"/>
        <end position="110"/>
    </location>
    <ligand>
        <name>pyridoxal 5'-phosphate</name>
        <dbReference type="ChEBI" id="CHEBI:597326"/>
    </ligand>
</feature>
<feature type="binding site" evidence="1">
    <location>
        <position position="134"/>
    </location>
    <ligand>
        <name>substrate</name>
    </ligand>
</feature>
<feature type="binding site" evidence="1">
    <location>
        <position position="182"/>
    </location>
    <ligand>
        <name>pyridoxal 5'-phosphate</name>
        <dbReference type="ChEBI" id="CHEBI:597326"/>
    </ligand>
</feature>
<feature type="binding site" evidence="1">
    <location>
        <begin position="207"/>
        <end position="210"/>
    </location>
    <ligand>
        <name>pyridoxal 5'-phosphate</name>
        <dbReference type="ChEBI" id="CHEBI:597326"/>
    </ligand>
</feature>
<feature type="binding site" evidence="1">
    <location>
        <begin position="236"/>
        <end position="239"/>
    </location>
    <ligand>
        <name>pyridoxal 5'-phosphate</name>
        <dbReference type="ChEBI" id="CHEBI:597326"/>
    </ligand>
</feature>
<feature type="binding site" evidence="1">
    <location>
        <position position="348"/>
    </location>
    <ligand>
        <name>substrate</name>
    </ligand>
</feature>
<feature type="modified residue" description="N6-(pyridoxal phosphate)lysine" evidence="1">
    <location>
        <position position="239"/>
    </location>
</feature>
<name>BIOF_CAUVN</name>
<dbReference type="EC" id="2.3.1.47"/>
<dbReference type="EMBL" id="CP001340">
    <property type="protein sequence ID" value="ACL95112.1"/>
    <property type="molecule type" value="Genomic_DNA"/>
</dbReference>
<dbReference type="RefSeq" id="WP_012640275.1">
    <property type="nucleotide sequence ID" value="NC_011916.1"/>
</dbReference>
<dbReference type="RefSeq" id="YP_002517020.1">
    <property type="nucleotide sequence ID" value="NC_011916.1"/>
</dbReference>
<dbReference type="SMR" id="B8GVE2"/>
<dbReference type="GeneID" id="7331706"/>
<dbReference type="KEGG" id="ccs:CCNA_01647"/>
<dbReference type="PATRIC" id="fig|565050.3.peg.1623"/>
<dbReference type="HOGENOM" id="CLU_015846_11_0_5"/>
<dbReference type="OrthoDB" id="9807157at2"/>
<dbReference type="PhylomeDB" id="B8GVE2"/>
<dbReference type="UniPathway" id="UPA00078"/>
<dbReference type="Proteomes" id="UP000001364">
    <property type="component" value="Chromosome"/>
</dbReference>
<dbReference type="GO" id="GO:0008710">
    <property type="term" value="F:8-amino-7-oxononanoate synthase activity"/>
    <property type="evidence" value="ECO:0007669"/>
    <property type="project" value="UniProtKB-EC"/>
</dbReference>
<dbReference type="GO" id="GO:0030170">
    <property type="term" value="F:pyridoxal phosphate binding"/>
    <property type="evidence" value="ECO:0007669"/>
    <property type="project" value="InterPro"/>
</dbReference>
<dbReference type="GO" id="GO:0009102">
    <property type="term" value="P:biotin biosynthetic process"/>
    <property type="evidence" value="ECO:0007669"/>
    <property type="project" value="UniProtKB-UniPathway"/>
</dbReference>
<dbReference type="Gene3D" id="3.90.1150.10">
    <property type="entry name" value="Aspartate Aminotransferase, domain 1"/>
    <property type="match status" value="1"/>
</dbReference>
<dbReference type="Gene3D" id="3.40.640.10">
    <property type="entry name" value="Type I PLP-dependent aspartate aminotransferase-like (Major domain)"/>
    <property type="match status" value="1"/>
</dbReference>
<dbReference type="InterPro" id="IPR001917">
    <property type="entry name" value="Aminotrans_II_pyridoxalP_BS"/>
</dbReference>
<dbReference type="InterPro" id="IPR004839">
    <property type="entry name" value="Aminotransferase_I/II_large"/>
</dbReference>
<dbReference type="InterPro" id="IPR050087">
    <property type="entry name" value="AON_synthase_class-II"/>
</dbReference>
<dbReference type="InterPro" id="IPR004723">
    <property type="entry name" value="AONS_Archaea/Proteobacteria"/>
</dbReference>
<dbReference type="InterPro" id="IPR015424">
    <property type="entry name" value="PyrdxlP-dep_Trfase"/>
</dbReference>
<dbReference type="InterPro" id="IPR015421">
    <property type="entry name" value="PyrdxlP-dep_Trfase_major"/>
</dbReference>
<dbReference type="InterPro" id="IPR015422">
    <property type="entry name" value="PyrdxlP-dep_Trfase_small"/>
</dbReference>
<dbReference type="NCBIfam" id="TIGR00858">
    <property type="entry name" value="bioF"/>
    <property type="match status" value="1"/>
</dbReference>
<dbReference type="PANTHER" id="PTHR13693:SF100">
    <property type="entry name" value="8-AMINO-7-OXONONANOATE SYNTHASE"/>
    <property type="match status" value="1"/>
</dbReference>
<dbReference type="PANTHER" id="PTHR13693">
    <property type="entry name" value="CLASS II AMINOTRANSFERASE/8-AMINO-7-OXONONANOATE SYNTHASE"/>
    <property type="match status" value="1"/>
</dbReference>
<dbReference type="Pfam" id="PF00155">
    <property type="entry name" value="Aminotran_1_2"/>
    <property type="match status" value="1"/>
</dbReference>
<dbReference type="SUPFAM" id="SSF53383">
    <property type="entry name" value="PLP-dependent transferases"/>
    <property type="match status" value="1"/>
</dbReference>
<dbReference type="PROSITE" id="PS00599">
    <property type="entry name" value="AA_TRANSFER_CLASS_2"/>
    <property type="match status" value="1"/>
</dbReference>
<protein>
    <recommendedName>
        <fullName>Putative 8-amino-7-oxononanoate synthase</fullName>
        <shortName>AONS</shortName>
        <ecNumber>2.3.1.47</ecNumber>
    </recommendedName>
    <alternativeName>
        <fullName>7-keto-8-amino-pelargonic acid synthase</fullName>
        <shortName>7-KAP synthase</shortName>
    </alternativeName>
    <alternativeName>
        <fullName>8-amino-7-ketopelargonate synthase</fullName>
    </alternativeName>
</protein>
<proteinExistence type="inferred from homology"/>
<keyword id="KW-0093">Biotin biosynthesis</keyword>
<keyword id="KW-0663">Pyridoxal phosphate</keyword>
<keyword id="KW-1185">Reference proteome</keyword>
<keyword id="KW-0808">Transferase</keyword>
<organism>
    <name type="scientific">Caulobacter vibrioides (strain NA1000 / CB15N)</name>
    <name type="common">Caulobacter crescentus</name>
    <dbReference type="NCBI Taxonomy" id="565050"/>
    <lineage>
        <taxon>Bacteria</taxon>
        <taxon>Pseudomonadati</taxon>
        <taxon>Pseudomonadota</taxon>
        <taxon>Alphaproteobacteria</taxon>
        <taxon>Caulobacterales</taxon>
        <taxon>Caulobacteraceae</taxon>
        <taxon>Caulobacter</taxon>
    </lineage>
</organism>
<gene>
    <name type="primary">bioF</name>
    <name type="ordered locus">CCNA_01647</name>
</gene>
<accession>B8GVE2</accession>
<comment type="function">
    <text evidence="1">Catalyzes the decarboxylative condensation of pimeloyl-[acyl-carrier protein] and L-alanine to produce 8-amino-7-oxononanoate (AON), [acyl-carrier protein], and carbon dioxide.</text>
</comment>
<comment type="catalytic activity">
    <reaction>
        <text>6-carboxyhexanoyl-[ACP] + L-alanine + H(+) = (8S)-8-amino-7-oxononanoate + holo-[ACP] + CO2</text>
        <dbReference type="Rhea" id="RHEA:42288"/>
        <dbReference type="Rhea" id="RHEA-COMP:9685"/>
        <dbReference type="Rhea" id="RHEA-COMP:9955"/>
        <dbReference type="ChEBI" id="CHEBI:15378"/>
        <dbReference type="ChEBI" id="CHEBI:16526"/>
        <dbReference type="ChEBI" id="CHEBI:57972"/>
        <dbReference type="ChEBI" id="CHEBI:64479"/>
        <dbReference type="ChEBI" id="CHEBI:78846"/>
        <dbReference type="ChEBI" id="CHEBI:149468"/>
        <dbReference type="EC" id="2.3.1.47"/>
    </reaction>
</comment>
<comment type="cofactor">
    <cofactor evidence="1">
        <name>pyridoxal 5'-phosphate</name>
        <dbReference type="ChEBI" id="CHEBI:597326"/>
    </cofactor>
</comment>
<comment type="pathway">
    <text>Cofactor biosynthesis; biotin biosynthesis.</text>
</comment>
<comment type="subunit">
    <text evidence="1">Homodimer.</text>
</comment>
<comment type="similarity">
    <text evidence="2">Belongs to the class-II pyridoxal-phosphate-dependent aminotransferase family. BioF subfamily.</text>
</comment>
<sequence>MRSLDAFAGQKLAALDAQSLRRRLSPTRRHDGAVVERDGKRMISFSCNDYLNLSQHHLVRAAAAEAALNYGAGAAASRLVTGDHPLLSDLEKRLAHLKGTEAACVFGSGYLANTGVIPTLVGPGDVILIDALAHACIWAGAQLSGAKVVKFAHNDPADLERLLLAERGAARHALVATDGVFSMDGDIAPLDALSELCQRHDAWLLSDDAHGVGVLAEGRGSGALFPTAKIPLQMGTLSKALGSYGGYLCGSQAVVDLLKTRARTLVYATGLPPASAAAALASLDLIAANPTMTEVPLAKARLFTRRLGLPEACSPIVPVVLGSAESALAASTELQNQGFLVVAIRPPTVPDGTARLRIAFSAAHEDADIIRLADAIAKLRETAS</sequence>
<reference key="1">
    <citation type="journal article" date="2010" name="J. Bacteriol.">
        <title>The genetic basis of laboratory adaptation in Caulobacter crescentus.</title>
        <authorList>
            <person name="Marks M.E."/>
            <person name="Castro-Rojas C.M."/>
            <person name="Teiling C."/>
            <person name="Du L."/>
            <person name="Kapatral V."/>
            <person name="Walunas T.L."/>
            <person name="Crosson S."/>
        </authorList>
    </citation>
    <scope>NUCLEOTIDE SEQUENCE [LARGE SCALE GENOMIC DNA]</scope>
    <source>
        <strain>NA1000 / CB15N</strain>
    </source>
</reference>
<evidence type="ECO:0000250" key="1"/>
<evidence type="ECO:0000305" key="2"/>